<comment type="function">
    <text evidence="1">Catalyzes the decarboxylative condensation of pimeloyl-[acyl-carrier protein] and L-alanine to produce 8-amino-7-oxononanoate (AON), [acyl-carrier protein], and carbon dioxide.</text>
</comment>
<comment type="catalytic activity">
    <reaction evidence="1">
        <text>6-carboxyhexanoyl-[ACP] + L-alanine + H(+) = (8S)-8-amino-7-oxononanoate + holo-[ACP] + CO2</text>
        <dbReference type="Rhea" id="RHEA:42288"/>
        <dbReference type="Rhea" id="RHEA-COMP:9685"/>
        <dbReference type="Rhea" id="RHEA-COMP:9955"/>
        <dbReference type="ChEBI" id="CHEBI:15378"/>
        <dbReference type="ChEBI" id="CHEBI:16526"/>
        <dbReference type="ChEBI" id="CHEBI:57972"/>
        <dbReference type="ChEBI" id="CHEBI:64479"/>
        <dbReference type="ChEBI" id="CHEBI:78846"/>
        <dbReference type="ChEBI" id="CHEBI:149468"/>
        <dbReference type="EC" id="2.3.1.47"/>
    </reaction>
</comment>
<comment type="cofactor">
    <cofactor evidence="1">
        <name>pyridoxal 5'-phosphate</name>
        <dbReference type="ChEBI" id="CHEBI:597326"/>
    </cofactor>
</comment>
<comment type="pathway">
    <text evidence="1">Cofactor biosynthesis; biotin biosynthesis.</text>
</comment>
<comment type="subunit">
    <text evidence="1">Homodimer.</text>
</comment>
<comment type="similarity">
    <text evidence="1">Belongs to the class-II pyridoxal-phosphate-dependent aminotransferase family. BioF subfamily.</text>
</comment>
<protein>
    <recommendedName>
        <fullName evidence="1">8-amino-7-oxononanoate synthase</fullName>
        <shortName evidence="1">AONS</shortName>
        <ecNumber evidence="1">2.3.1.47</ecNumber>
    </recommendedName>
    <alternativeName>
        <fullName evidence="1">7-keto-8-amino-pelargonic acid synthase</fullName>
        <shortName evidence="1">7-KAP synthase</shortName>
        <shortName evidence="1">KAPA synthase</shortName>
    </alternativeName>
    <alternativeName>
        <fullName evidence="1">8-amino-7-ketopelargonate synthase</fullName>
    </alternativeName>
</protein>
<dbReference type="EC" id="2.3.1.47" evidence="1"/>
<dbReference type="EMBL" id="FM209186">
    <property type="protein sequence ID" value="CAW25224.1"/>
    <property type="molecule type" value="Genomic_DNA"/>
</dbReference>
<dbReference type="RefSeq" id="WP_003084826.1">
    <property type="nucleotide sequence ID" value="NC_011770.1"/>
</dbReference>
<dbReference type="SMR" id="B7V486"/>
<dbReference type="KEGG" id="pag:PLES_04971"/>
<dbReference type="HOGENOM" id="CLU_015846_11_0_6"/>
<dbReference type="UniPathway" id="UPA00078"/>
<dbReference type="GO" id="GO:0008710">
    <property type="term" value="F:8-amino-7-oxononanoate synthase activity"/>
    <property type="evidence" value="ECO:0007669"/>
    <property type="project" value="UniProtKB-UniRule"/>
</dbReference>
<dbReference type="GO" id="GO:0030170">
    <property type="term" value="F:pyridoxal phosphate binding"/>
    <property type="evidence" value="ECO:0007669"/>
    <property type="project" value="UniProtKB-UniRule"/>
</dbReference>
<dbReference type="GO" id="GO:0009102">
    <property type="term" value="P:biotin biosynthetic process"/>
    <property type="evidence" value="ECO:0007669"/>
    <property type="project" value="UniProtKB-UniRule"/>
</dbReference>
<dbReference type="CDD" id="cd06454">
    <property type="entry name" value="KBL_like"/>
    <property type="match status" value="1"/>
</dbReference>
<dbReference type="Gene3D" id="3.90.1150.10">
    <property type="entry name" value="Aspartate Aminotransferase, domain 1"/>
    <property type="match status" value="1"/>
</dbReference>
<dbReference type="Gene3D" id="3.40.640.10">
    <property type="entry name" value="Type I PLP-dependent aspartate aminotransferase-like (Major domain)"/>
    <property type="match status" value="1"/>
</dbReference>
<dbReference type="HAMAP" id="MF_01693">
    <property type="entry name" value="BioF_aminotrans_2"/>
    <property type="match status" value="1"/>
</dbReference>
<dbReference type="InterPro" id="IPR001917">
    <property type="entry name" value="Aminotrans_II_pyridoxalP_BS"/>
</dbReference>
<dbReference type="InterPro" id="IPR004839">
    <property type="entry name" value="Aminotransferase_I/II_large"/>
</dbReference>
<dbReference type="InterPro" id="IPR050087">
    <property type="entry name" value="AON_synthase_class-II"/>
</dbReference>
<dbReference type="InterPro" id="IPR004723">
    <property type="entry name" value="AONS_Archaea/Proteobacteria"/>
</dbReference>
<dbReference type="InterPro" id="IPR022834">
    <property type="entry name" value="AONS_Proteobacteria"/>
</dbReference>
<dbReference type="InterPro" id="IPR015424">
    <property type="entry name" value="PyrdxlP-dep_Trfase"/>
</dbReference>
<dbReference type="InterPro" id="IPR015421">
    <property type="entry name" value="PyrdxlP-dep_Trfase_major"/>
</dbReference>
<dbReference type="InterPro" id="IPR015422">
    <property type="entry name" value="PyrdxlP-dep_Trfase_small"/>
</dbReference>
<dbReference type="NCBIfam" id="TIGR00858">
    <property type="entry name" value="bioF"/>
    <property type="match status" value="1"/>
</dbReference>
<dbReference type="PANTHER" id="PTHR13693:SF100">
    <property type="entry name" value="8-AMINO-7-OXONONANOATE SYNTHASE"/>
    <property type="match status" value="1"/>
</dbReference>
<dbReference type="PANTHER" id="PTHR13693">
    <property type="entry name" value="CLASS II AMINOTRANSFERASE/8-AMINO-7-OXONONANOATE SYNTHASE"/>
    <property type="match status" value="1"/>
</dbReference>
<dbReference type="Pfam" id="PF00155">
    <property type="entry name" value="Aminotran_1_2"/>
    <property type="match status" value="1"/>
</dbReference>
<dbReference type="SUPFAM" id="SSF53383">
    <property type="entry name" value="PLP-dependent transferases"/>
    <property type="match status" value="1"/>
</dbReference>
<dbReference type="PROSITE" id="PS00599">
    <property type="entry name" value="AA_TRANSFER_CLASS_2"/>
    <property type="match status" value="1"/>
</dbReference>
<proteinExistence type="inferred from homology"/>
<feature type="chain" id="PRO_0000381073" description="8-amino-7-oxononanoate synthase">
    <location>
        <begin position="1"/>
        <end position="401"/>
    </location>
</feature>
<feature type="binding site" evidence="1">
    <location>
        <position position="19"/>
    </location>
    <ligand>
        <name>substrate</name>
    </ligand>
</feature>
<feature type="binding site" evidence="1">
    <location>
        <begin position="106"/>
        <end position="107"/>
    </location>
    <ligand>
        <name>pyridoxal 5'-phosphate</name>
        <dbReference type="ChEBI" id="CHEBI:597326"/>
    </ligand>
</feature>
<feature type="binding site" evidence="1">
    <location>
        <position position="131"/>
    </location>
    <ligand>
        <name>substrate</name>
    </ligand>
</feature>
<feature type="binding site" evidence="1">
    <location>
        <position position="176"/>
    </location>
    <ligand>
        <name>pyridoxal 5'-phosphate</name>
        <dbReference type="ChEBI" id="CHEBI:597326"/>
    </ligand>
</feature>
<feature type="binding site" evidence="1">
    <location>
        <position position="204"/>
    </location>
    <ligand>
        <name>pyridoxal 5'-phosphate</name>
        <dbReference type="ChEBI" id="CHEBI:597326"/>
    </ligand>
</feature>
<feature type="binding site" evidence="1">
    <location>
        <position position="233"/>
    </location>
    <ligand>
        <name>pyridoxal 5'-phosphate</name>
        <dbReference type="ChEBI" id="CHEBI:597326"/>
    </ligand>
</feature>
<feature type="binding site" evidence="1">
    <location>
        <position position="350"/>
    </location>
    <ligand>
        <name>substrate</name>
    </ligand>
</feature>
<feature type="modified residue" description="N6-(pyridoxal phosphate)lysine" evidence="1">
    <location>
        <position position="236"/>
    </location>
</feature>
<gene>
    <name evidence="1" type="primary">bioF</name>
    <name type="ordered locus">PLES_04971</name>
</gene>
<evidence type="ECO:0000255" key="1">
    <source>
        <dbReference type="HAMAP-Rule" id="MF_01693"/>
    </source>
</evidence>
<name>BIOF_PSEA8</name>
<keyword id="KW-0093">Biotin biosynthesis</keyword>
<keyword id="KW-0663">Pyridoxal phosphate</keyword>
<keyword id="KW-0808">Transferase</keyword>
<accession>B7V486</accession>
<organism>
    <name type="scientific">Pseudomonas aeruginosa (strain LESB58)</name>
    <dbReference type="NCBI Taxonomy" id="557722"/>
    <lineage>
        <taxon>Bacteria</taxon>
        <taxon>Pseudomonadati</taxon>
        <taxon>Pseudomonadota</taxon>
        <taxon>Gammaproteobacteria</taxon>
        <taxon>Pseudomonadales</taxon>
        <taxon>Pseudomonadaceae</taxon>
        <taxon>Pseudomonas</taxon>
    </lineage>
</organism>
<sequence>MSFDLASRLASRRAEDLYRQRPLLESAQGPDVVVDGQPLLAFCSNDYLGLANHPEVIAALRAGAERWGVGGGASHLVVGHSGPHHELELALAEFTGRPRALLFSTGYMANLGAVTALVGKGDTVLEDRLNHASLLDAGLLSGARFSRYLHNDPASLAARLDKAEGNTLVVTDGVFSMDGNLADLPALAAVAQARGAWLMVDDAHGFGPLGASGGGIVEHFGLGQEQVPVLIGTLGKGFGTAGAFVAGSEELIETLIQYARPYIYTTSQPPAVACATLKSLELLRRESWRRQHLAALIARFRHGAEALGLTLMDSFTPIQPILVGGSRQAVALAGMLRARGIMVGAIRPPTVPANSARLRVTLSAAHSEAQVDRLLEALGESWRQLSSSLLAEIEAEEGDDA</sequence>
<reference key="1">
    <citation type="journal article" date="2009" name="Genome Res.">
        <title>Newly introduced genomic prophage islands are critical determinants of in vivo competitiveness in the Liverpool epidemic strain of Pseudomonas aeruginosa.</title>
        <authorList>
            <person name="Winstanley C."/>
            <person name="Langille M.G.I."/>
            <person name="Fothergill J.L."/>
            <person name="Kukavica-Ibrulj I."/>
            <person name="Paradis-Bleau C."/>
            <person name="Sanschagrin F."/>
            <person name="Thomson N.R."/>
            <person name="Winsor G.L."/>
            <person name="Quail M.A."/>
            <person name="Lennard N."/>
            <person name="Bignell A."/>
            <person name="Clarke L."/>
            <person name="Seeger K."/>
            <person name="Saunders D."/>
            <person name="Harris D."/>
            <person name="Parkhill J."/>
            <person name="Hancock R.E.W."/>
            <person name="Brinkman F.S.L."/>
            <person name="Levesque R.C."/>
        </authorList>
    </citation>
    <scope>NUCLEOTIDE SEQUENCE [LARGE SCALE GENOMIC DNA]</scope>
    <source>
        <strain>LESB58</strain>
    </source>
</reference>